<sequence length="489" mass="54531">MTFRHCVAVDLGASSGRVMLARYDSKHRTLTLREIHRFVNCLQKTDGFDTWDIDSLEKDIRLGLKKVCNEGILIDSIGIDTWGVDYVLLDKQGQRVGLPVSYRDNRTTGIMPQALVQIGKSEIYRRSGIQFLPFNTIYQLRALTKQQPELTAQVAHALLMPDYFSYRLTGEMNWEYTNATTTQLVNINTDDWDDTLLAWTGAKKGWFGRPSHPGNVIGDWICPQGNRIPVVAVASHDTASAVIASPLANKHSAYLSSGTWSLMGFESKMPYTTDEALAANITNEGGAEGRYRVLKNIMGLWLLQRVLKERRITDLPALIAQTEALPACRFLINPNDDRFINPDDMRAEIQAACRETDQPVPVSDAELARCIFDSLALLYADILHELANLRGEKFTQLHIVGGGCQNALLNQLCADACGIRVMAGPVEASTLGNIGIQLMTLDELNNVDDFRQVISANYDLTTYIPNPDSEIARHVAQFQPKRQTKELCA</sequence>
<reference key="1">
    <citation type="journal article" date="2011" name="J. Bacteriol.">
        <title>Comparative genomics of 28 Salmonella enterica isolates: evidence for CRISPR-mediated adaptive sublineage evolution.</title>
        <authorList>
            <person name="Fricke W.F."/>
            <person name="Mammel M.K."/>
            <person name="McDermott P.F."/>
            <person name="Tartera C."/>
            <person name="White D.G."/>
            <person name="Leclerc J.E."/>
            <person name="Ravel J."/>
            <person name="Cebula T.A."/>
        </authorList>
    </citation>
    <scope>NUCLEOTIDE SEQUENCE [LARGE SCALE GENOMIC DNA]</scope>
    <source>
        <strain>SL483</strain>
    </source>
</reference>
<dbReference type="EC" id="2.7.1.5" evidence="1"/>
<dbReference type="EMBL" id="CP001138">
    <property type="protein sequence ID" value="ACH52563.1"/>
    <property type="molecule type" value="Genomic_DNA"/>
</dbReference>
<dbReference type="RefSeq" id="WP_000143953.1">
    <property type="nucleotide sequence ID" value="NC_011149.1"/>
</dbReference>
<dbReference type="SMR" id="B5F0M8"/>
<dbReference type="KEGG" id="sea:SeAg_B4290"/>
<dbReference type="HOGENOM" id="CLU_039395_0_0_6"/>
<dbReference type="UniPathway" id="UPA00541">
    <property type="reaction ID" value="UER00602"/>
</dbReference>
<dbReference type="Proteomes" id="UP000008819">
    <property type="component" value="Chromosome"/>
</dbReference>
<dbReference type="GO" id="GO:0005829">
    <property type="term" value="C:cytosol"/>
    <property type="evidence" value="ECO:0007669"/>
    <property type="project" value="TreeGrafter"/>
</dbReference>
<dbReference type="GO" id="GO:0005524">
    <property type="term" value="F:ATP binding"/>
    <property type="evidence" value="ECO:0007669"/>
    <property type="project" value="UniProtKB-KW"/>
</dbReference>
<dbReference type="GO" id="GO:0004370">
    <property type="term" value="F:glycerol kinase activity"/>
    <property type="evidence" value="ECO:0007669"/>
    <property type="project" value="TreeGrafter"/>
</dbReference>
<dbReference type="GO" id="GO:0008993">
    <property type="term" value="F:rhamnulokinase activity"/>
    <property type="evidence" value="ECO:0007669"/>
    <property type="project" value="UniProtKB-UniRule"/>
</dbReference>
<dbReference type="GO" id="GO:0006071">
    <property type="term" value="P:glycerol metabolic process"/>
    <property type="evidence" value="ECO:0007669"/>
    <property type="project" value="TreeGrafter"/>
</dbReference>
<dbReference type="GO" id="GO:0019301">
    <property type="term" value="P:rhamnose catabolic process"/>
    <property type="evidence" value="ECO:0007669"/>
    <property type="project" value="UniProtKB-UniRule"/>
</dbReference>
<dbReference type="CDD" id="cd07771">
    <property type="entry name" value="ASKHA_NBD_FGGY_RhaB-like"/>
    <property type="match status" value="1"/>
</dbReference>
<dbReference type="FunFam" id="3.30.420.40:FF:000064">
    <property type="entry name" value="Rhamnulokinase"/>
    <property type="match status" value="1"/>
</dbReference>
<dbReference type="FunFam" id="3.30.420.40:FF:000073">
    <property type="entry name" value="Rhamnulokinase"/>
    <property type="match status" value="1"/>
</dbReference>
<dbReference type="Gene3D" id="3.30.420.40">
    <property type="match status" value="2"/>
</dbReference>
<dbReference type="HAMAP" id="MF_01535">
    <property type="entry name" value="Rhamnulokinase"/>
    <property type="match status" value="1"/>
</dbReference>
<dbReference type="InterPro" id="IPR043129">
    <property type="entry name" value="ATPase_NBD"/>
</dbReference>
<dbReference type="InterPro" id="IPR018485">
    <property type="entry name" value="FGGY_C"/>
</dbReference>
<dbReference type="InterPro" id="IPR018484">
    <property type="entry name" value="FGGY_N"/>
</dbReference>
<dbReference type="InterPro" id="IPR013449">
    <property type="entry name" value="Rhamnulokinase"/>
</dbReference>
<dbReference type="NCBIfam" id="NF007925">
    <property type="entry name" value="PRK10640.1"/>
    <property type="match status" value="1"/>
</dbReference>
<dbReference type="NCBIfam" id="TIGR02627">
    <property type="entry name" value="rhamnulo_kin"/>
    <property type="match status" value="1"/>
</dbReference>
<dbReference type="PANTHER" id="PTHR10196:SF93">
    <property type="entry name" value="L-RHAMNULOKINASE"/>
    <property type="match status" value="1"/>
</dbReference>
<dbReference type="PANTHER" id="PTHR10196">
    <property type="entry name" value="SUGAR KINASE"/>
    <property type="match status" value="1"/>
</dbReference>
<dbReference type="Pfam" id="PF02782">
    <property type="entry name" value="FGGY_C"/>
    <property type="match status" value="1"/>
</dbReference>
<dbReference type="Pfam" id="PF00370">
    <property type="entry name" value="FGGY_N"/>
    <property type="match status" value="1"/>
</dbReference>
<dbReference type="SUPFAM" id="SSF53067">
    <property type="entry name" value="Actin-like ATPase domain"/>
    <property type="match status" value="2"/>
</dbReference>
<gene>
    <name evidence="1" type="primary">rhaB</name>
    <name type="ordered locus">SeAg_B4290</name>
</gene>
<name>RHAB_SALA4</name>
<feature type="chain" id="PRO_1000146548" description="Rhamnulokinase">
    <location>
        <begin position="1"/>
        <end position="489"/>
    </location>
</feature>
<feature type="active site" description="Proton acceptor" evidence="1">
    <location>
        <position position="237"/>
    </location>
</feature>
<feature type="binding site" evidence="1">
    <location>
        <begin position="13"/>
        <end position="17"/>
    </location>
    <ligand>
        <name>ATP</name>
        <dbReference type="ChEBI" id="CHEBI:30616"/>
    </ligand>
</feature>
<feature type="binding site" evidence="1">
    <location>
        <position position="83"/>
    </location>
    <ligand>
        <name>substrate</name>
    </ligand>
</feature>
<feature type="binding site" evidence="1">
    <location>
        <begin position="236"/>
        <end position="238"/>
    </location>
    <ligand>
        <name>substrate</name>
    </ligand>
</feature>
<feature type="binding site" evidence="1">
    <location>
        <position position="259"/>
    </location>
    <ligand>
        <name>ATP</name>
        <dbReference type="ChEBI" id="CHEBI:30616"/>
    </ligand>
</feature>
<feature type="binding site" evidence="1">
    <location>
        <position position="296"/>
    </location>
    <ligand>
        <name>substrate</name>
    </ligand>
</feature>
<feature type="binding site" evidence="1">
    <location>
        <position position="304"/>
    </location>
    <ligand>
        <name>ATP</name>
        <dbReference type="ChEBI" id="CHEBI:30616"/>
    </ligand>
</feature>
<feature type="binding site" evidence="1">
    <location>
        <position position="402"/>
    </location>
    <ligand>
        <name>ATP</name>
        <dbReference type="ChEBI" id="CHEBI:30616"/>
    </ligand>
</feature>
<feature type="disulfide bond" evidence="1">
    <location>
        <begin position="68"/>
        <end position="222"/>
    </location>
</feature>
<feature type="disulfide bond" evidence="1">
    <location>
        <begin position="353"/>
        <end position="370"/>
    </location>
</feature>
<feature type="disulfide bond" evidence="1">
    <location>
        <begin position="413"/>
        <end position="417"/>
    </location>
</feature>
<keyword id="KW-0067">ATP-binding</keyword>
<keyword id="KW-1015">Disulfide bond</keyword>
<keyword id="KW-0418">Kinase</keyword>
<keyword id="KW-0460">Magnesium</keyword>
<keyword id="KW-0547">Nucleotide-binding</keyword>
<keyword id="KW-0684">Rhamnose metabolism</keyword>
<keyword id="KW-0808">Transferase</keyword>
<accession>B5F0M8</accession>
<comment type="function">
    <text evidence="1">Involved in the catabolism of L-rhamnose (6-deoxy-L-mannose). Catalyzes the transfer of the gamma-phosphate group from ATP to the 1-hydroxyl group of L-rhamnulose to yield L-rhamnulose 1-phosphate.</text>
</comment>
<comment type="catalytic activity">
    <reaction evidence="1">
        <text>L-rhamnulose + ATP = L-rhamnulose 1-phosphate + ADP + H(+)</text>
        <dbReference type="Rhea" id="RHEA:20117"/>
        <dbReference type="ChEBI" id="CHEBI:15378"/>
        <dbReference type="ChEBI" id="CHEBI:17897"/>
        <dbReference type="ChEBI" id="CHEBI:30616"/>
        <dbReference type="ChEBI" id="CHEBI:58313"/>
        <dbReference type="ChEBI" id="CHEBI:456216"/>
        <dbReference type="EC" id="2.7.1.5"/>
    </reaction>
</comment>
<comment type="cofactor">
    <cofactor evidence="1">
        <name>Mg(2+)</name>
        <dbReference type="ChEBI" id="CHEBI:18420"/>
    </cofactor>
</comment>
<comment type="pathway">
    <text evidence="1">Carbohydrate degradation; L-rhamnose degradation; glycerone phosphate from L-rhamnose: step 2/3.</text>
</comment>
<comment type="similarity">
    <text evidence="1">Belongs to the rhamnulokinase family.</text>
</comment>
<evidence type="ECO:0000255" key="1">
    <source>
        <dbReference type="HAMAP-Rule" id="MF_01535"/>
    </source>
</evidence>
<protein>
    <recommendedName>
        <fullName evidence="1">Rhamnulokinase</fullName>
        <shortName evidence="1">RhaB</shortName>
        <ecNumber evidence="1">2.7.1.5</ecNumber>
    </recommendedName>
    <alternativeName>
        <fullName evidence="1">ATP:L-rhamnulose phosphotransferase</fullName>
    </alternativeName>
    <alternativeName>
        <fullName evidence="1">L-rhamnulose 1-kinase</fullName>
    </alternativeName>
    <alternativeName>
        <fullName evidence="1">Rhamnulose kinase</fullName>
    </alternativeName>
</protein>
<organism>
    <name type="scientific">Salmonella agona (strain SL483)</name>
    <dbReference type="NCBI Taxonomy" id="454166"/>
    <lineage>
        <taxon>Bacteria</taxon>
        <taxon>Pseudomonadati</taxon>
        <taxon>Pseudomonadota</taxon>
        <taxon>Gammaproteobacteria</taxon>
        <taxon>Enterobacterales</taxon>
        <taxon>Enterobacteriaceae</taxon>
        <taxon>Salmonella</taxon>
    </lineage>
</organism>
<proteinExistence type="inferred from homology"/>